<organism>
    <name type="scientific">Brugia malayi</name>
    <name type="common">Filarial nematode worm</name>
    <dbReference type="NCBI Taxonomy" id="6279"/>
    <lineage>
        <taxon>Eukaryota</taxon>
        <taxon>Metazoa</taxon>
        <taxon>Ecdysozoa</taxon>
        <taxon>Nematoda</taxon>
        <taxon>Chromadorea</taxon>
        <taxon>Rhabditida</taxon>
        <taxon>Spirurina</taxon>
        <taxon>Spiruromorpha</taxon>
        <taxon>Filarioidea</taxon>
        <taxon>Onchocercidae</taxon>
        <taxon>Brugia</taxon>
    </lineage>
</organism>
<sequence length="339" mass="36155">MSKPKVGINGFGRIGRLVLRAAVEKDTVDVVAVNDPFINIDYMVYMFKYDSTHGRFKGSVSAEGGKLIVTNGKTTHHISVHNSKDPAEIPWGVDGAEYVVESTGVFTTTDKASAHLKGGAKKVIISAPSADAPMFVMGVNNDMYDKANNHIISNASCTTNCLAPLAKVIHDKFGIIEGLMTTVHATTATQKTVDGPSGKLWRDGRGAGQNIIPASTGAAKAVGKVIPGLNGKLTGMANRVPTPDVSVVDLTCRLQKGATMDEIKAAVKEAANGPMKGILEYTEDQVVSTDFTGDTHSSIFDSLACISLNPNFVKLIAWYDNEYGYSNRVVDLISYIASR</sequence>
<protein>
    <recommendedName>
        <fullName>Glyceraldehyde-3-phosphate dehydrogenase</fullName>
        <shortName>GAPDH</shortName>
        <ecNumber>1.2.1.12</ecNumber>
    </recommendedName>
</protein>
<gene>
    <name type="primary">G3PD</name>
</gene>
<feature type="chain" id="PRO_0000145507" description="Glyceraldehyde-3-phosphate dehydrogenase">
    <location>
        <begin position="1"/>
        <end position="339"/>
    </location>
</feature>
<feature type="active site" description="Nucleophile" evidence="2">
    <location>
        <position position="157"/>
    </location>
</feature>
<feature type="binding site" evidence="1">
    <location>
        <begin position="13"/>
        <end position="14"/>
    </location>
    <ligand>
        <name>NAD(+)</name>
        <dbReference type="ChEBI" id="CHEBI:57540"/>
    </ligand>
</feature>
<feature type="binding site" evidence="1">
    <location>
        <position position="35"/>
    </location>
    <ligand>
        <name>NAD(+)</name>
        <dbReference type="ChEBI" id="CHEBI:57540"/>
    </ligand>
</feature>
<feature type="binding site" evidence="1">
    <location>
        <position position="84"/>
    </location>
    <ligand>
        <name>NAD(+)</name>
        <dbReference type="ChEBI" id="CHEBI:57540"/>
    </ligand>
</feature>
<feature type="binding site" evidence="1">
    <location>
        <begin position="156"/>
        <end position="158"/>
    </location>
    <ligand>
        <name>D-glyceraldehyde 3-phosphate</name>
        <dbReference type="ChEBI" id="CHEBI:59776"/>
    </ligand>
</feature>
<feature type="binding site" evidence="1">
    <location>
        <position position="187"/>
    </location>
    <ligand>
        <name>D-glyceraldehyde 3-phosphate</name>
        <dbReference type="ChEBI" id="CHEBI:59776"/>
    </ligand>
</feature>
<feature type="binding site" evidence="1">
    <location>
        <begin position="216"/>
        <end position="217"/>
    </location>
    <ligand>
        <name>D-glyceraldehyde 3-phosphate</name>
        <dbReference type="ChEBI" id="CHEBI:59776"/>
    </ligand>
</feature>
<feature type="binding site" evidence="1">
    <location>
        <position position="239"/>
    </location>
    <ligand>
        <name>D-glyceraldehyde 3-phosphate</name>
        <dbReference type="ChEBI" id="CHEBI:59776"/>
    </ligand>
</feature>
<feature type="binding site" evidence="1">
    <location>
        <position position="321"/>
    </location>
    <ligand>
        <name>NAD(+)</name>
        <dbReference type="ChEBI" id="CHEBI:57540"/>
    </ligand>
</feature>
<feature type="site" description="Activates thiol group during catalysis" evidence="1">
    <location>
        <position position="184"/>
    </location>
</feature>
<feature type="strand" evidence="4">
    <location>
        <begin position="5"/>
        <end position="9"/>
    </location>
</feature>
<feature type="helix" evidence="4">
    <location>
        <begin position="13"/>
        <end position="25"/>
    </location>
</feature>
<feature type="strand" evidence="4">
    <location>
        <begin position="27"/>
        <end position="34"/>
    </location>
</feature>
<feature type="helix" evidence="4">
    <location>
        <begin position="40"/>
        <end position="48"/>
    </location>
</feature>
<feature type="turn" evidence="4">
    <location>
        <begin position="51"/>
        <end position="53"/>
    </location>
</feature>
<feature type="strand" evidence="4">
    <location>
        <begin position="57"/>
        <end position="63"/>
    </location>
</feature>
<feature type="strand" evidence="4">
    <location>
        <begin position="66"/>
        <end position="70"/>
    </location>
</feature>
<feature type="strand" evidence="4">
    <location>
        <begin position="75"/>
        <end position="81"/>
    </location>
</feature>
<feature type="helix" evidence="4">
    <location>
        <begin position="86"/>
        <end position="88"/>
    </location>
</feature>
<feature type="helix" evidence="4">
    <location>
        <begin position="91"/>
        <end position="94"/>
    </location>
</feature>
<feature type="strand" evidence="4">
    <location>
        <begin position="98"/>
        <end position="101"/>
    </location>
</feature>
<feature type="strand" evidence="4">
    <location>
        <begin position="103"/>
        <end position="105"/>
    </location>
</feature>
<feature type="helix" evidence="4">
    <location>
        <begin position="109"/>
        <end position="112"/>
    </location>
</feature>
<feature type="helix" evidence="4">
    <location>
        <begin position="114"/>
        <end position="117"/>
    </location>
</feature>
<feature type="strand" evidence="4">
    <location>
        <begin position="121"/>
        <end position="127"/>
    </location>
</feature>
<feature type="strand" evidence="4">
    <location>
        <begin position="130"/>
        <end position="132"/>
    </location>
</feature>
<feature type="turn" evidence="4">
    <location>
        <begin position="137"/>
        <end position="139"/>
    </location>
</feature>
<feature type="helix" evidence="4">
    <location>
        <begin position="141"/>
        <end position="143"/>
    </location>
</feature>
<feature type="turn" evidence="4">
    <location>
        <begin position="146"/>
        <end position="148"/>
    </location>
</feature>
<feature type="strand" evidence="4">
    <location>
        <begin position="150"/>
        <end position="153"/>
    </location>
</feature>
<feature type="helix" evidence="4">
    <location>
        <begin position="157"/>
        <end position="173"/>
    </location>
</feature>
<feature type="strand" evidence="4">
    <location>
        <begin position="175"/>
        <end position="185"/>
    </location>
</feature>
<feature type="strand" evidence="4">
    <location>
        <begin position="190"/>
        <end position="194"/>
    </location>
</feature>
<feature type="helix" evidence="4">
    <location>
        <begin position="201"/>
        <end position="204"/>
    </location>
</feature>
<feature type="turn" evidence="4">
    <location>
        <begin position="207"/>
        <end position="209"/>
    </location>
</feature>
<feature type="strand" evidence="4">
    <location>
        <begin position="212"/>
        <end position="215"/>
    </location>
</feature>
<feature type="helix" evidence="4">
    <location>
        <begin position="218"/>
        <end position="225"/>
    </location>
</feature>
<feature type="helix" evidence="4">
    <location>
        <begin position="227"/>
        <end position="229"/>
    </location>
</feature>
<feature type="turn" evidence="4">
    <location>
        <begin position="230"/>
        <end position="232"/>
    </location>
</feature>
<feature type="strand" evidence="4">
    <location>
        <begin position="233"/>
        <end position="241"/>
    </location>
</feature>
<feature type="strand" evidence="4">
    <location>
        <begin position="246"/>
        <end position="256"/>
    </location>
</feature>
<feature type="helix" evidence="4">
    <location>
        <begin position="260"/>
        <end position="272"/>
    </location>
</feature>
<feature type="turn" evidence="4">
    <location>
        <begin position="273"/>
        <end position="278"/>
    </location>
</feature>
<feature type="strand" evidence="4">
    <location>
        <begin position="279"/>
        <end position="282"/>
    </location>
</feature>
<feature type="helix" evidence="4">
    <location>
        <begin position="288"/>
        <end position="291"/>
    </location>
</feature>
<feature type="strand" evidence="4">
    <location>
        <begin position="297"/>
        <end position="301"/>
    </location>
</feature>
<feature type="helix" evidence="4">
    <location>
        <begin position="302"/>
        <end position="304"/>
    </location>
</feature>
<feature type="strand" evidence="4">
    <location>
        <begin position="306"/>
        <end position="309"/>
    </location>
</feature>
<feature type="strand" evidence="4">
    <location>
        <begin position="312"/>
        <end position="319"/>
    </location>
</feature>
<feature type="helix" evidence="4">
    <location>
        <begin position="323"/>
        <end position="337"/>
    </location>
</feature>
<comment type="catalytic activity">
    <reaction evidence="2">
        <text>D-glyceraldehyde 3-phosphate + phosphate + NAD(+) = (2R)-3-phospho-glyceroyl phosphate + NADH + H(+)</text>
        <dbReference type="Rhea" id="RHEA:10300"/>
        <dbReference type="ChEBI" id="CHEBI:15378"/>
        <dbReference type="ChEBI" id="CHEBI:43474"/>
        <dbReference type="ChEBI" id="CHEBI:57540"/>
        <dbReference type="ChEBI" id="CHEBI:57604"/>
        <dbReference type="ChEBI" id="CHEBI:57945"/>
        <dbReference type="ChEBI" id="CHEBI:59776"/>
        <dbReference type="EC" id="1.2.1.12"/>
    </reaction>
</comment>
<comment type="pathway">
    <text>Carbohydrate degradation; glycolysis; pyruvate from D-glyceraldehyde 3-phosphate: step 1/5.</text>
</comment>
<comment type="subunit">
    <text>Homotetramer.</text>
</comment>
<comment type="subcellular location">
    <subcellularLocation>
        <location>Cytoplasm</location>
    </subcellularLocation>
</comment>
<comment type="similarity">
    <text evidence="3">Belongs to the glyceraldehyde-3-phosphate dehydrogenase family.</text>
</comment>
<accession>P48812</accession>
<reference key="1">
    <citation type="submission" date="1994-12" db="EMBL/GenBank/DDBJ databases">
        <authorList>
            <person name="Scott A.L."/>
            <person name="Yenbutr P."/>
        </authorList>
    </citation>
    <scope>NUCLEOTIDE SEQUENCE [MRNA]</scope>
</reference>
<keyword id="KW-0002">3D-structure</keyword>
<keyword id="KW-0963">Cytoplasm</keyword>
<keyword id="KW-0324">Glycolysis</keyword>
<keyword id="KW-0520">NAD</keyword>
<keyword id="KW-0560">Oxidoreductase</keyword>
<keyword id="KW-1185">Reference proteome</keyword>
<evidence type="ECO:0000250" key="1"/>
<evidence type="ECO:0000255" key="2">
    <source>
        <dbReference type="PROSITE-ProRule" id="PRU10009"/>
    </source>
</evidence>
<evidence type="ECO:0000305" key="3"/>
<evidence type="ECO:0007829" key="4">
    <source>
        <dbReference type="PDB" id="4K9D"/>
    </source>
</evidence>
<proteinExistence type="evidence at protein level"/>
<dbReference type="EC" id="1.2.1.12"/>
<dbReference type="EMBL" id="U18137">
    <property type="protein sequence ID" value="AAA57337.1"/>
    <property type="molecule type" value="mRNA"/>
</dbReference>
<dbReference type="PDB" id="4K9D">
    <property type="method" value="X-ray"/>
    <property type="resolution" value="2.10 A"/>
    <property type="chains" value="A/B/C/D/E/F/G/H=1-339"/>
</dbReference>
<dbReference type="PDBsum" id="4K9D"/>
<dbReference type="SMR" id="P48812"/>
<dbReference type="FunCoup" id="P48812">
    <property type="interactions" value="466"/>
</dbReference>
<dbReference type="STRING" id="6279.P48812"/>
<dbReference type="InParanoid" id="P48812"/>
<dbReference type="UniPathway" id="UPA00109">
    <property type="reaction ID" value="UER00184"/>
</dbReference>
<dbReference type="EvolutionaryTrace" id="P48812"/>
<dbReference type="Proteomes" id="UP000006672">
    <property type="component" value="Unassembled WGS sequence"/>
</dbReference>
<dbReference type="GO" id="GO:0005829">
    <property type="term" value="C:cytosol"/>
    <property type="evidence" value="ECO:0007669"/>
    <property type="project" value="TreeGrafter"/>
</dbReference>
<dbReference type="GO" id="GO:0004365">
    <property type="term" value="F:glyceraldehyde-3-phosphate dehydrogenase (NAD+) (phosphorylating) activity"/>
    <property type="evidence" value="ECO:0007669"/>
    <property type="project" value="UniProtKB-EC"/>
</dbReference>
<dbReference type="GO" id="GO:0051287">
    <property type="term" value="F:NAD binding"/>
    <property type="evidence" value="ECO:0007669"/>
    <property type="project" value="InterPro"/>
</dbReference>
<dbReference type="GO" id="GO:0050661">
    <property type="term" value="F:NADP binding"/>
    <property type="evidence" value="ECO:0007669"/>
    <property type="project" value="InterPro"/>
</dbReference>
<dbReference type="GO" id="GO:0006006">
    <property type="term" value="P:glucose metabolic process"/>
    <property type="evidence" value="ECO:0007669"/>
    <property type="project" value="InterPro"/>
</dbReference>
<dbReference type="GO" id="GO:0006096">
    <property type="term" value="P:glycolytic process"/>
    <property type="evidence" value="ECO:0007669"/>
    <property type="project" value="UniProtKB-UniPathway"/>
</dbReference>
<dbReference type="CDD" id="cd18126">
    <property type="entry name" value="GAPDH_I_C"/>
    <property type="match status" value="1"/>
</dbReference>
<dbReference type="CDD" id="cd05214">
    <property type="entry name" value="GAPDH_I_N"/>
    <property type="match status" value="1"/>
</dbReference>
<dbReference type="FunFam" id="3.30.360.10:FF:000001">
    <property type="entry name" value="Glyceraldehyde-3-phosphate dehydrogenase"/>
    <property type="match status" value="1"/>
</dbReference>
<dbReference type="FunFam" id="3.40.50.720:FF:000266">
    <property type="entry name" value="Glyceraldehyde-3-phosphate dehydrogenase"/>
    <property type="match status" value="1"/>
</dbReference>
<dbReference type="Gene3D" id="3.30.360.10">
    <property type="entry name" value="Dihydrodipicolinate Reductase, domain 2"/>
    <property type="match status" value="1"/>
</dbReference>
<dbReference type="Gene3D" id="3.40.50.720">
    <property type="entry name" value="NAD(P)-binding Rossmann-like Domain"/>
    <property type="match status" value="1"/>
</dbReference>
<dbReference type="InterPro" id="IPR020831">
    <property type="entry name" value="GlycerAld/Erythrose_P_DH"/>
</dbReference>
<dbReference type="InterPro" id="IPR020830">
    <property type="entry name" value="GlycerAld_3-P_DH_AS"/>
</dbReference>
<dbReference type="InterPro" id="IPR020829">
    <property type="entry name" value="GlycerAld_3-P_DH_cat"/>
</dbReference>
<dbReference type="InterPro" id="IPR020828">
    <property type="entry name" value="GlycerAld_3-P_DH_NAD(P)-bd"/>
</dbReference>
<dbReference type="InterPro" id="IPR006424">
    <property type="entry name" value="Glyceraldehyde-3-P_DH_1"/>
</dbReference>
<dbReference type="InterPro" id="IPR036291">
    <property type="entry name" value="NAD(P)-bd_dom_sf"/>
</dbReference>
<dbReference type="NCBIfam" id="TIGR01534">
    <property type="entry name" value="GAPDH-I"/>
    <property type="match status" value="1"/>
</dbReference>
<dbReference type="PANTHER" id="PTHR10836">
    <property type="entry name" value="GLYCERALDEHYDE 3-PHOSPHATE DEHYDROGENASE"/>
    <property type="match status" value="1"/>
</dbReference>
<dbReference type="PANTHER" id="PTHR10836:SF76">
    <property type="entry name" value="GLYCERALDEHYDE-3-PHOSPHATE DEHYDROGENASE-RELATED"/>
    <property type="match status" value="1"/>
</dbReference>
<dbReference type="Pfam" id="PF02800">
    <property type="entry name" value="Gp_dh_C"/>
    <property type="match status" value="1"/>
</dbReference>
<dbReference type="Pfam" id="PF00044">
    <property type="entry name" value="Gp_dh_N"/>
    <property type="match status" value="1"/>
</dbReference>
<dbReference type="PIRSF" id="PIRSF000149">
    <property type="entry name" value="GAP_DH"/>
    <property type="match status" value="1"/>
</dbReference>
<dbReference type="PRINTS" id="PR00078">
    <property type="entry name" value="G3PDHDRGNASE"/>
</dbReference>
<dbReference type="SMART" id="SM00846">
    <property type="entry name" value="Gp_dh_N"/>
    <property type="match status" value="1"/>
</dbReference>
<dbReference type="SUPFAM" id="SSF55347">
    <property type="entry name" value="Glyceraldehyde-3-phosphate dehydrogenase-like, C-terminal domain"/>
    <property type="match status" value="1"/>
</dbReference>
<dbReference type="SUPFAM" id="SSF51735">
    <property type="entry name" value="NAD(P)-binding Rossmann-fold domains"/>
    <property type="match status" value="1"/>
</dbReference>
<dbReference type="PROSITE" id="PS00071">
    <property type="entry name" value="GAPDH"/>
    <property type="match status" value="1"/>
</dbReference>
<name>G3P_BRUMA</name>